<sequence>MGNIITDTIIITSDKCDIVDNDNVERIQVWLSKNILRKFQINENEPLQLIILKRFKRILLICPSHDISQHVMDASRALEMENFNFSYSLQDGQRNLTKQYLKVPESEKMFLISPPASPPPEFDFSKCEDAPQRHIQSHIQQDQQQRLEASQLLPNNPDKNNNGTFTLLKSKVGAITIDRCPTNDGNGQMQLADHVKTAFPPKSIFDTDDDD</sequence>
<feature type="chain" id="PRO_0000211424" description="Calcipressin-like protein">
    <location>
        <begin position="1"/>
        <end position="211"/>
    </location>
</feature>
<feature type="modified residue" description="Phosphoserine" evidence="4">
    <location>
        <position position="113"/>
    </location>
</feature>
<feature type="modified residue" description="Phosphoserine" evidence="3 4">
    <location>
        <position position="117"/>
    </location>
</feature>
<feature type="modified residue" description="Phosphothreonine" evidence="4">
    <location>
        <position position="182"/>
    </location>
</feature>
<organism>
    <name type="scientific">Saccharomyces cerevisiae (strain ATCC 204508 / S288c)</name>
    <name type="common">Baker's yeast</name>
    <dbReference type="NCBI Taxonomy" id="559292"/>
    <lineage>
        <taxon>Eukaryota</taxon>
        <taxon>Fungi</taxon>
        <taxon>Dikarya</taxon>
        <taxon>Ascomycota</taxon>
        <taxon>Saccharomycotina</taxon>
        <taxon>Saccharomycetes</taxon>
        <taxon>Saccharomycetales</taxon>
        <taxon>Saccharomycetaceae</taxon>
        <taxon>Saccharomyces</taxon>
    </lineage>
</organism>
<accession>P36054</accession>
<accession>D6VX40</accession>
<gene>
    <name type="primary">RCN1</name>
    <name type="synonym">DSCR1L</name>
    <name type="ordered locus">YKL159C</name>
    <name type="ORF">YKL613</name>
</gene>
<proteinExistence type="evidence at protein level"/>
<name>RCN1_YEAST</name>
<protein>
    <recommendedName>
        <fullName>Calcipressin-like protein</fullName>
    </recommendedName>
    <alternativeName>
        <fullName>Down syndrome candidate region 1-like protein</fullName>
    </alternativeName>
    <alternativeName>
        <fullName>Regulator of calcineurin 1</fullName>
    </alternativeName>
</protein>
<reference key="1">
    <citation type="journal article" date="2000" name="Genomics">
        <title>A new gene family including DSCR1 (Down syndrome candidate region 1) and ZAKI-4: characterization from yeast to human and identification of DSCR1-like 2, a novel human member (DSCR1L2).</title>
        <authorList>
            <person name="Strippoli P."/>
            <person name="Lenzi L."/>
            <person name="Petrini M."/>
            <person name="Carinci P."/>
            <person name="Zannotti M."/>
        </authorList>
    </citation>
    <scope>NUCLEOTIDE SEQUENCE [MRNA]</scope>
    <source>
        <strain>CG1945</strain>
    </source>
</reference>
<reference key="2">
    <citation type="journal article" date="1994" name="Yeast">
        <title>DNA sequencing of a 36.2 kb fragment located between the FAS1 and LAP loci of chromosome XI of Saccharomyces cerevisiae.</title>
        <authorList>
            <person name="Vandenbol M."/>
            <person name="Bolle P.-A."/>
            <person name="Dion C."/>
            <person name="Portetelle D."/>
            <person name="Hilger F."/>
        </authorList>
    </citation>
    <scope>NUCLEOTIDE SEQUENCE [GENOMIC DNA]</scope>
    <source>
        <strain>ATCC 204508 / S288c</strain>
    </source>
</reference>
<reference key="3">
    <citation type="journal article" date="1994" name="Nature">
        <title>Complete DNA sequence of yeast chromosome XI.</title>
        <authorList>
            <person name="Dujon B."/>
            <person name="Alexandraki D."/>
            <person name="Andre B."/>
            <person name="Ansorge W."/>
            <person name="Baladron V."/>
            <person name="Ballesta J.P.G."/>
            <person name="Banrevi A."/>
            <person name="Bolle P.-A."/>
            <person name="Bolotin-Fukuhara M."/>
            <person name="Bossier P."/>
            <person name="Bou G."/>
            <person name="Boyer J."/>
            <person name="Buitrago M.J."/>
            <person name="Cheret G."/>
            <person name="Colleaux L."/>
            <person name="Daignan-Fornier B."/>
            <person name="del Rey F."/>
            <person name="Dion C."/>
            <person name="Domdey H."/>
            <person name="Duesterhoeft A."/>
            <person name="Duesterhus S."/>
            <person name="Entian K.-D."/>
            <person name="Erfle H."/>
            <person name="Esteban P.F."/>
            <person name="Feldmann H."/>
            <person name="Fernandes L."/>
            <person name="Fobo G.M."/>
            <person name="Fritz C."/>
            <person name="Fukuhara H."/>
            <person name="Gabel C."/>
            <person name="Gaillon L."/>
            <person name="Garcia-Cantalejo J.M."/>
            <person name="Garcia-Ramirez J.J."/>
            <person name="Gent M.E."/>
            <person name="Ghazvini M."/>
            <person name="Goffeau A."/>
            <person name="Gonzalez A."/>
            <person name="Grothues D."/>
            <person name="Guerreiro P."/>
            <person name="Hegemann J.H."/>
            <person name="Hewitt N."/>
            <person name="Hilger F."/>
            <person name="Hollenberg C.P."/>
            <person name="Horaitis O."/>
            <person name="Indge K.J."/>
            <person name="Jacquier A."/>
            <person name="James C.M."/>
            <person name="Jauniaux J.-C."/>
            <person name="Jimenez A."/>
            <person name="Keuchel H."/>
            <person name="Kirchrath L."/>
            <person name="Kleine K."/>
            <person name="Koetter P."/>
            <person name="Legrain P."/>
            <person name="Liebl S."/>
            <person name="Louis E.J."/>
            <person name="Maia e Silva A."/>
            <person name="Marck C."/>
            <person name="Monnier A.-L."/>
            <person name="Moestl D."/>
            <person name="Mueller S."/>
            <person name="Obermaier B."/>
            <person name="Oliver S.G."/>
            <person name="Pallier C."/>
            <person name="Pascolo S."/>
            <person name="Pfeiffer F."/>
            <person name="Philippsen P."/>
            <person name="Planta R.J."/>
            <person name="Pohl F.M."/>
            <person name="Pohl T.M."/>
            <person name="Poehlmann R."/>
            <person name="Portetelle D."/>
            <person name="Purnelle B."/>
            <person name="Puzos V."/>
            <person name="Ramezani Rad M."/>
            <person name="Rasmussen S.W."/>
            <person name="Remacha M.A."/>
            <person name="Revuelta J.L."/>
            <person name="Richard G.-F."/>
            <person name="Rieger M."/>
            <person name="Rodrigues-Pousada C."/>
            <person name="Rose M."/>
            <person name="Rupp T."/>
            <person name="Santos M.A."/>
            <person name="Schwager C."/>
            <person name="Sensen C."/>
            <person name="Skala J."/>
            <person name="Soares H."/>
            <person name="Sor F."/>
            <person name="Stegemann J."/>
            <person name="Tettelin H."/>
            <person name="Thierry A."/>
            <person name="Tzermia M."/>
            <person name="Urrestarazu L.A."/>
            <person name="van Dyck L."/>
            <person name="van Vliet-Reedijk J.C."/>
            <person name="Valens M."/>
            <person name="Vandenbol M."/>
            <person name="Vilela C."/>
            <person name="Vissers S."/>
            <person name="von Wettstein D."/>
            <person name="Voss H."/>
            <person name="Wiemann S."/>
            <person name="Xu G."/>
            <person name="Zimmermann J."/>
            <person name="Haasemann M."/>
            <person name="Becker I."/>
            <person name="Mewes H.-W."/>
        </authorList>
    </citation>
    <scope>NUCLEOTIDE SEQUENCE [LARGE SCALE GENOMIC DNA]</scope>
    <source>
        <strain>ATCC 204508 / S288c</strain>
    </source>
</reference>
<reference key="4">
    <citation type="journal article" date="2014" name="G3 (Bethesda)">
        <title>The reference genome sequence of Saccharomyces cerevisiae: Then and now.</title>
        <authorList>
            <person name="Engel S.R."/>
            <person name="Dietrich F.S."/>
            <person name="Fisk D.G."/>
            <person name="Binkley G."/>
            <person name="Balakrishnan R."/>
            <person name="Costanzo M.C."/>
            <person name="Dwight S.S."/>
            <person name="Hitz B.C."/>
            <person name="Karra K."/>
            <person name="Nash R.S."/>
            <person name="Weng S."/>
            <person name="Wong E.D."/>
            <person name="Lloyd P."/>
            <person name="Skrzypek M.S."/>
            <person name="Miyasato S.R."/>
            <person name="Simison M."/>
            <person name="Cherry J.M."/>
        </authorList>
    </citation>
    <scope>GENOME REANNOTATION</scope>
    <source>
        <strain>ATCC 204508 / S288c</strain>
    </source>
</reference>
<reference key="5">
    <citation type="journal article" date="2000" name="Genes Dev.">
        <title>A conserved family of calcineurin regulators.</title>
        <authorList>
            <person name="Kingsbury T.J."/>
            <person name="Cunningham K.W."/>
        </authorList>
    </citation>
    <scope>CHARACTERIZATION</scope>
</reference>
<reference key="6">
    <citation type="journal article" date="2003" name="Nature">
        <title>Global analysis of protein expression in yeast.</title>
        <authorList>
            <person name="Ghaemmaghami S."/>
            <person name="Huh W.-K."/>
            <person name="Bower K."/>
            <person name="Howson R.W."/>
            <person name="Belle A."/>
            <person name="Dephoure N."/>
            <person name="O'Shea E.K."/>
            <person name="Weissman J.S."/>
        </authorList>
    </citation>
    <scope>LEVEL OF PROTEIN EXPRESSION [LARGE SCALE ANALYSIS]</scope>
</reference>
<reference key="7">
    <citation type="journal article" date="2008" name="Mol. Cell. Proteomics">
        <title>A multidimensional chromatography technology for in-depth phosphoproteome analysis.</title>
        <authorList>
            <person name="Albuquerque C.P."/>
            <person name="Smolka M.B."/>
            <person name="Payne S.H."/>
            <person name="Bafna V."/>
            <person name="Eng J."/>
            <person name="Zhou H."/>
        </authorList>
    </citation>
    <scope>PHOSPHORYLATION [LARGE SCALE ANALYSIS] AT SER-117</scope>
    <scope>IDENTIFICATION BY MASS SPECTROMETRY [LARGE SCALE ANALYSIS]</scope>
</reference>
<reference key="8">
    <citation type="journal article" date="2009" name="Science">
        <title>Global analysis of Cdk1 substrate phosphorylation sites provides insights into evolution.</title>
        <authorList>
            <person name="Holt L.J."/>
            <person name="Tuch B.B."/>
            <person name="Villen J."/>
            <person name="Johnson A.D."/>
            <person name="Gygi S.P."/>
            <person name="Morgan D.O."/>
        </authorList>
    </citation>
    <scope>PHOSPHORYLATION [LARGE SCALE ANALYSIS] AT SER-113; SER-117 AND THR-182</scope>
    <scope>IDENTIFICATION BY MASS SPECTROMETRY [LARGE SCALE ANALYSIS]</scope>
</reference>
<dbReference type="EMBL" id="AF174139">
    <property type="protein sequence ID" value="AAF01680.1"/>
    <property type="molecule type" value="mRNA"/>
</dbReference>
<dbReference type="EMBL" id="Z26877">
    <property type="protein sequence ID" value="CAA81495.1"/>
    <property type="molecule type" value="Genomic_DNA"/>
</dbReference>
<dbReference type="EMBL" id="Z28159">
    <property type="protein sequence ID" value="CAA82001.1"/>
    <property type="molecule type" value="Genomic_DNA"/>
</dbReference>
<dbReference type="EMBL" id="BK006944">
    <property type="protein sequence ID" value="DAA09006.1"/>
    <property type="molecule type" value="Genomic_DNA"/>
</dbReference>
<dbReference type="PIR" id="S37792">
    <property type="entry name" value="S37792"/>
</dbReference>
<dbReference type="RefSeq" id="NP_012763.1">
    <property type="nucleotide sequence ID" value="NM_001179725.1"/>
</dbReference>
<dbReference type="BioGRID" id="33979">
    <property type="interactions" value="71"/>
</dbReference>
<dbReference type="DIP" id="DIP-7429N"/>
<dbReference type="ELM" id="P36054"/>
<dbReference type="FunCoup" id="P36054">
    <property type="interactions" value="55"/>
</dbReference>
<dbReference type="IntAct" id="P36054">
    <property type="interactions" value="8"/>
</dbReference>
<dbReference type="MINT" id="P36054"/>
<dbReference type="STRING" id="4932.YKL159C"/>
<dbReference type="iPTMnet" id="P36054"/>
<dbReference type="PaxDb" id="4932-YKL159C"/>
<dbReference type="PeptideAtlas" id="P36054"/>
<dbReference type="EnsemblFungi" id="YKL159C_mRNA">
    <property type="protein sequence ID" value="YKL159C"/>
    <property type="gene ID" value="YKL159C"/>
</dbReference>
<dbReference type="GeneID" id="853698"/>
<dbReference type="KEGG" id="sce:YKL159C"/>
<dbReference type="AGR" id="SGD:S000001642"/>
<dbReference type="SGD" id="S000001642">
    <property type="gene designation" value="RCN1"/>
</dbReference>
<dbReference type="VEuPathDB" id="FungiDB:YKL159C"/>
<dbReference type="eggNOG" id="KOG4019">
    <property type="taxonomic scope" value="Eukaryota"/>
</dbReference>
<dbReference type="HOGENOM" id="CLU_1390040_0_0_1"/>
<dbReference type="InParanoid" id="P36054"/>
<dbReference type="OMA" id="MPPRSIF"/>
<dbReference type="OrthoDB" id="17212at2759"/>
<dbReference type="BioCyc" id="YEAST:G3O-31927-MONOMER"/>
<dbReference type="BioGRID-ORCS" id="853698">
    <property type="hits" value="1 hit in 10 CRISPR screens"/>
</dbReference>
<dbReference type="PRO" id="PR:P36054"/>
<dbReference type="Proteomes" id="UP000002311">
    <property type="component" value="Chromosome XI"/>
</dbReference>
<dbReference type="RNAct" id="P36054">
    <property type="molecule type" value="protein"/>
</dbReference>
<dbReference type="GO" id="GO:0005737">
    <property type="term" value="C:cytoplasm"/>
    <property type="evidence" value="ECO:0000318"/>
    <property type="project" value="GO_Central"/>
</dbReference>
<dbReference type="GO" id="GO:0005634">
    <property type="term" value="C:nucleus"/>
    <property type="evidence" value="ECO:0000318"/>
    <property type="project" value="GO_Central"/>
</dbReference>
<dbReference type="GO" id="GO:0008597">
    <property type="term" value="F:calcium-dependent protein serine/threonine phosphatase regulator activity"/>
    <property type="evidence" value="ECO:0000315"/>
    <property type="project" value="SGD"/>
</dbReference>
<dbReference type="GO" id="GO:0030346">
    <property type="term" value="F:protein phosphatase 2B binding"/>
    <property type="evidence" value="ECO:0000314"/>
    <property type="project" value="SGD"/>
</dbReference>
<dbReference type="GO" id="GO:0019722">
    <property type="term" value="P:calcium-mediated signaling"/>
    <property type="evidence" value="ECO:0000315"/>
    <property type="project" value="SGD"/>
</dbReference>
<dbReference type="InterPro" id="IPR006931">
    <property type="entry name" value="Calcipressin"/>
</dbReference>
<dbReference type="InterPro" id="IPR016523">
    <property type="entry name" value="Rcn1_fungi"/>
</dbReference>
<dbReference type="PANTHER" id="PTHR10300">
    <property type="entry name" value="CALCIPRESSIN"/>
    <property type="match status" value="1"/>
</dbReference>
<dbReference type="PANTHER" id="PTHR10300:SF14">
    <property type="entry name" value="PROTEIN SARAH"/>
    <property type="match status" value="1"/>
</dbReference>
<dbReference type="Pfam" id="PF04847">
    <property type="entry name" value="Calcipressin"/>
    <property type="match status" value="1"/>
</dbReference>
<dbReference type="PIRSF" id="PIRSF007798">
    <property type="entry name" value="UCP007798"/>
    <property type="match status" value="1"/>
</dbReference>
<evidence type="ECO:0000269" key="1">
    <source>
    </source>
</evidence>
<evidence type="ECO:0000305" key="2"/>
<evidence type="ECO:0007744" key="3">
    <source>
    </source>
</evidence>
<evidence type="ECO:0007744" key="4">
    <source>
    </source>
</evidence>
<comment type="function">
    <text>Inhibits calcineurin-dependent transcriptional responses by binding to the catalytic domain of calcineurin.</text>
</comment>
<comment type="interaction">
    <interactant intactId="EBI-14898">
        <id>P36054</id>
    </interactant>
    <interactant intactId="EBI-4434">
        <id>P07834</id>
        <label>CDC4</label>
    </interactant>
    <organismsDiffer>false</organismsDiffer>
    <experiments>4</experiments>
</comment>
<comment type="miscellaneous">
    <text evidence="1">Present with 521 molecules/cell in log phase SD medium.</text>
</comment>
<comment type="similarity">
    <text evidence="2">Belongs to the RCAN family.</text>
</comment>
<keyword id="KW-0597">Phosphoprotein</keyword>
<keyword id="KW-1185">Reference proteome</keyword>